<organism>
    <name type="scientific">Mycobacterium marinum (strain ATCC BAA-535 / M)</name>
    <dbReference type="NCBI Taxonomy" id="216594"/>
    <lineage>
        <taxon>Bacteria</taxon>
        <taxon>Bacillati</taxon>
        <taxon>Actinomycetota</taxon>
        <taxon>Actinomycetes</taxon>
        <taxon>Mycobacteriales</taxon>
        <taxon>Mycobacteriaceae</taxon>
        <taxon>Mycobacterium</taxon>
        <taxon>Mycobacterium ulcerans group</taxon>
    </lineage>
</organism>
<feature type="chain" id="PRO_1000130696" description="UPF0235 protein MMAR_2910">
    <location>
        <begin position="1"/>
        <end position="76"/>
    </location>
</feature>
<evidence type="ECO:0000255" key="1">
    <source>
        <dbReference type="HAMAP-Rule" id="MF_00634"/>
    </source>
</evidence>
<dbReference type="EMBL" id="CP000854">
    <property type="protein sequence ID" value="ACC41349.1"/>
    <property type="molecule type" value="Genomic_DNA"/>
</dbReference>
<dbReference type="RefSeq" id="WP_012394608.1">
    <property type="nucleotide sequence ID" value="NC_010612.1"/>
</dbReference>
<dbReference type="SMR" id="B2HE69"/>
<dbReference type="STRING" id="216594.MMAR_2910"/>
<dbReference type="GeneID" id="34343119"/>
<dbReference type="KEGG" id="mmi:MMAR_2910"/>
<dbReference type="eggNOG" id="COG1872">
    <property type="taxonomic scope" value="Bacteria"/>
</dbReference>
<dbReference type="HOGENOM" id="CLU_130694_5_3_11"/>
<dbReference type="OrthoDB" id="9801878at2"/>
<dbReference type="Proteomes" id="UP000001190">
    <property type="component" value="Chromosome"/>
</dbReference>
<dbReference type="Gene3D" id="3.30.1200.10">
    <property type="entry name" value="YggU-like"/>
    <property type="match status" value="1"/>
</dbReference>
<dbReference type="HAMAP" id="MF_00634">
    <property type="entry name" value="UPF0235"/>
    <property type="match status" value="1"/>
</dbReference>
<dbReference type="InterPro" id="IPR003746">
    <property type="entry name" value="DUF167"/>
</dbReference>
<dbReference type="InterPro" id="IPR036591">
    <property type="entry name" value="YggU-like_sf"/>
</dbReference>
<dbReference type="NCBIfam" id="TIGR00251">
    <property type="entry name" value="DUF167 family protein"/>
    <property type="match status" value="1"/>
</dbReference>
<dbReference type="Pfam" id="PF02594">
    <property type="entry name" value="DUF167"/>
    <property type="match status" value="1"/>
</dbReference>
<dbReference type="SMART" id="SM01152">
    <property type="entry name" value="DUF167"/>
    <property type="match status" value="1"/>
</dbReference>
<dbReference type="SUPFAM" id="SSF69786">
    <property type="entry name" value="YggU-like"/>
    <property type="match status" value="1"/>
</dbReference>
<reference key="1">
    <citation type="journal article" date="2008" name="Genome Res.">
        <title>Insights from the complete genome sequence of Mycobacterium marinum on the evolution of Mycobacterium tuberculosis.</title>
        <authorList>
            <person name="Stinear T.P."/>
            <person name="Seemann T."/>
            <person name="Harrison P.F."/>
            <person name="Jenkin G.A."/>
            <person name="Davies J.K."/>
            <person name="Johnson P.D."/>
            <person name="Abdellah Z."/>
            <person name="Arrowsmith C."/>
            <person name="Chillingworth T."/>
            <person name="Churcher C."/>
            <person name="Clarke K."/>
            <person name="Cronin A."/>
            <person name="Davis P."/>
            <person name="Goodhead I."/>
            <person name="Holroyd N."/>
            <person name="Jagels K."/>
            <person name="Lord A."/>
            <person name="Moule S."/>
            <person name="Mungall K."/>
            <person name="Norbertczak H."/>
            <person name="Quail M.A."/>
            <person name="Rabbinowitsch E."/>
            <person name="Walker D."/>
            <person name="White B."/>
            <person name="Whitehead S."/>
            <person name="Small P.L."/>
            <person name="Brosch R."/>
            <person name="Ramakrishnan L."/>
            <person name="Fischbach M.A."/>
            <person name="Parkhill J."/>
            <person name="Cole S.T."/>
        </authorList>
    </citation>
    <scope>NUCLEOTIDE SEQUENCE [LARGE SCALE GENOMIC DNA]</scope>
    <source>
        <strain>ATCC BAA-535 / M</strain>
    </source>
</reference>
<gene>
    <name type="ordered locus">MMAR_2910</name>
</gene>
<comment type="similarity">
    <text evidence="1">Belongs to the UPF0235 family.</text>
</comment>
<sequence>MTDIVVVRVKPGSRKGPLVETGSDAELTIYVRERAVDGKANEAAARLLAAHLQLPRSRVELVAGATSRLKRFRVER</sequence>
<accession>B2HE69</accession>
<keyword id="KW-1185">Reference proteome</keyword>
<protein>
    <recommendedName>
        <fullName evidence="1">UPF0235 protein MMAR_2910</fullName>
    </recommendedName>
</protein>
<proteinExistence type="inferred from homology"/>
<name>Y2910_MYCMM</name>